<gene>
    <name evidence="1" type="primary">dapA</name>
    <name type="ordered locus">Teth39_1502</name>
</gene>
<protein>
    <recommendedName>
        <fullName evidence="1">4-hydroxy-tetrahydrodipicolinate synthase</fullName>
        <shortName evidence="1">HTPA synthase</shortName>
        <ecNumber evidence="1">4.3.3.7</ecNumber>
    </recommendedName>
</protein>
<organism>
    <name type="scientific">Thermoanaerobacter pseudethanolicus (strain ATCC 33223 / 39E)</name>
    <name type="common">Clostridium thermohydrosulfuricum</name>
    <dbReference type="NCBI Taxonomy" id="340099"/>
    <lineage>
        <taxon>Bacteria</taxon>
        <taxon>Bacillati</taxon>
        <taxon>Bacillota</taxon>
        <taxon>Clostridia</taxon>
        <taxon>Thermoanaerobacterales</taxon>
        <taxon>Thermoanaerobacteraceae</taxon>
        <taxon>Thermoanaerobacter</taxon>
    </lineage>
</organism>
<comment type="function">
    <text evidence="1">Catalyzes the condensation of (S)-aspartate-beta-semialdehyde [(S)-ASA] and pyruvate to 4-hydroxy-tetrahydrodipicolinate (HTPA).</text>
</comment>
<comment type="catalytic activity">
    <reaction evidence="1">
        <text>L-aspartate 4-semialdehyde + pyruvate = (2S,4S)-4-hydroxy-2,3,4,5-tetrahydrodipicolinate + H2O + H(+)</text>
        <dbReference type="Rhea" id="RHEA:34171"/>
        <dbReference type="ChEBI" id="CHEBI:15361"/>
        <dbReference type="ChEBI" id="CHEBI:15377"/>
        <dbReference type="ChEBI" id="CHEBI:15378"/>
        <dbReference type="ChEBI" id="CHEBI:67139"/>
        <dbReference type="ChEBI" id="CHEBI:537519"/>
        <dbReference type="EC" id="4.3.3.7"/>
    </reaction>
</comment>
<comment type="pathway">
    <text evidence="1">Amino-acid biosynthesis; L-lysine biosynthesis via DAP pathway; (S)-tetrahydrodipicolinate from L-aspartate: step 3/4.</text>
</comment>
<comment type="subunit">
    <text evidence="1">Homotetramer; dimer of dimers.</text>
</comment>
<comment type="subcellular location">
    <subcellularLocation>
        <location evidence="1">Cytoplasm</location>
    </subcellularLocation>
</comment>
<comment type="similarity">
    <text evidence="1">Belongs to the DapA family.</text>
</comment>
<comment type="caution">
    <text evidence="2">Was originally thought to be a dihydrodipicolinate synthase (DHDPS), catalyzing the condensation of (S)-aspartate-beta-semialdehyde [(S)-ASA] and pyruvate to dihydrodipicolinate (DHDP). However, it was shown in E.coli that the product of the enzymatic reaction is not dihydrodipicolinate but in fact (4S)-4-hydroxy-2,3,4,5-tetrahydro-(2S)-dipicolinic acid (HTPA), and that the consecutive dehydration reaction leading to DHDP is not spontaneous but catalyzed by DapB.</text>
</comment>
<proteinExistence type="inferred from homology"/>
<feature type="chain" id="PRO_1000124075" description="4-hydroxy-tetrahydrodipicolinate synthase">
    <location>
        <begin position="1"/>
        <end position="297"/>
    </location>
</feature>
<feature type="active site" description="Proton donor/acceptor" evidence="1">
    <location>
        <position position="134"/>
    </location>
</feature>
<feature type="active site" description="Schiff-base intermediate with substrate" evidence="1">
    <location>
        <position position="163"/>
    </location>
</feature>
<feature type="binding site" evidence="1">
    <location>
        <position position="46"/>
    </location>
    <ligand>
        <name>pyruvate</name>
        <dbReference type="ChEBI" id="CHEBI:15361"/>
    </ligand>
</feature>
<feature type="binding site" evidence="1">
    <location>
        <position position="205"/>
    </location>
    <ligand>
        <name>pyruvate</name>
        <dbReference type="ChEBI" id="CHEBI:15361"/>
    </ligand>
</feature>
<feature type="site" description="Part of a proton relay during catalysis" evidence="1">
    <location>
        <position position="45"/>
    </location>
</feature>
<feature type="site" description="Part of a proton relay during catalysis" evidence="1">
    <location>
        <position position="108"/>
    </location>
</feature>
<sequence length="297" mass="32318">MPVFKGSGVAIVTPFNEEGVNFEKLGELIEWHIKEGTDAIIICGTTGEASTMTQEEQQQAIKFTVEKVAGRIPVIAGTGSNNTAHAVEMSEYAQSAGADALLVITPYYNKTTQKGLVAHFTEIARHVDIPIIIYNVPSRTSLNMLPETYLELSKHVDNVVGVKEASGDIVQVAEIARIMGKSFEIYSGNDDQVIPIMSLGGLGVISVTANIIPAKIHEMTTAYLNGDIEKARDMQLELNPLNKALFIETNPIPVKTAMNLMGFNVGPLRLPLVEMSDKNLEYLKSVLSKYGLLKEAN</sequence>
<evidence type="ECO:0000255" key="1">
    <source>
        <dbReference type="HAMAP-Rule" id="MF_00418"/>
    </source>
</evidence>
<evidence type="ECO:0000305" key="2"/>
<keyword id="KW-0028">Amino-acid biosynthesis</keyword>
<keyword id="KW-0963">Cytoplasm</keyword>
<keyword id="KW-0220">Diaminopimelate biosynthesis</keyword>
<keyword id="KW-0456">Lyase</keyword>
<keyword id="KW-0457">Lysine biosynthesis</keyword>
<keyword id="KW-1185">Reference proteome</keyword>
<keyword id="KW-0704">Schiff base</keyword>
<dbReference type="EC" id="4.3.3.7" evidence="1"/>
<dbReference type="EMBL" id="CP000924">
    <property type="protein sequence ID" value="ABY95151.1"/>
    <property type="molecule type" value="Genomic_DNA"/>
</dbReference>
<dbReference type="RefSeq" id="WP_003866978.1">
    <property type="nucleotide sequence ID" value="NC_010321.1"/>
</dbReference>
<dbReference type="SMR" id="B0KAL7"/>
<dbReference type="STRING" id="340099.Teth39_1502"/>
<dbReference type="KEGG" id="tpd:Teth39_1502"/>
<dbReference type="eggNOG" id="COG0329">
    <property type="taxonomic scope" value="Bacteria"/>
</dbReference>
<dbReference type="HOGENOM" id="CLU_049343_7_1_9"/>
<dbReference type="UniPathway" id="UPA00034">
    <property type="reaction ID" value="UER00017"/>
</dbReference>
<dbReference type="Proteomes" id="UP000002156">
    <property type="component" value="Chromosome"/>
</dbReference>
<dbReference type="GO" id="GO:0005829">
    <property type="term" value="C:cytosol"/>
    <property type="evidence" value="ECO:0007669"/>
    <property type="project" value="TreeGrafter"/>
</dbReference>
<dbReference type="GO" id="GO:0008840">
    <property type="term" value="F:4-hydroxy-tetrahydrodipicolinate synthase activity"/>
    <property type="evidence" value="ECO:0007669"/>
    <property type="project" value="UniProtKB-UniRule"/>
</dbReference>
<dbReference type="GO" id="GO:0019877">
    <property type="term" value="P:diaminopimelate biosynthetic process"/>
    <property type="evidence" value="ECO:0007669"/>
    <property type="project" value="UniProtKB-UniRule"/>
</dbReference>
<dbReference type="GO" id="GO:0009089">
    <property type="term" value="P:lysine biosynthetic process via diaminopimelate"/>
    <property type="evidence" value="ECO:0007669"/>
    <property type="project" value="UniProtKB-UniRule"/>
</dbReference>
<dbReference type="CDD" id="cd00950">
    <property type="entry name" value="DHDPS"/>
    <property type="match status" value="1"/>
</dbReference>
<dbReference type="Gene3D" id="3.20.20.70">
    <property type="entry name" value="Aldolase class I"/>
    <property type="match status" value="1"/>
</dbReference>
<dbReference type="HAMAP" id="MF_00418">
    <property type="entry name" value="DapA"/>
    <property type="match status" value="1"/>
</dbReference>
<dbReference type="InterPro" id="IPR013785">
    <property type="entry name" value="Aldolase_TIM"/>
</dbReference>
<dbReference type="InterPro" id="IPR005263">
    <property type="entry name" value="DapA"/>
</dbReference>
<dbReference type="InterPro" id="IPR002220">
    <property type="entry name" value="DapA-like"/>
</dbReference>
<dbReference type="InterPro" id="IPR020625">
    <property type="entry name" value="Schiff_base-form_aldolases_AS"/>
</dbReference>
<dbReference type="InterPro" id="IPR020624">
    <property type="entry name" value="Schiff_base-form_aldolases_CS"/>
</dbReference>
<dbReference type="NCBIfam" id="TIGR00674">
    <property type="entry name" value="dapA"/>
    <property type="match status" value="1"/>
</dbReference>
<dbReference type="PANTHER" id="PTHR12128:SF66">
    <property type="entry name" value="4-HYDROXY-2-OXOGLUTARATE ALDOLASE, MITOCHONDRIAL"/>
    <property type="match status" value="1"/>
</dbReference>
<dbReference type="PANTHER" id="PTHR12128">
    <property type="entry name" value="DIHYDRODIPICOLINATE SYNTHASE"/>
    <property type="match status" value="1"/>
</dbReference>
<dbReference type="Pfam" id="PF00701">
    <property type="entry name" value="DHDPS"/>
    <property type="match status" value="1"/>
</dbReference>
<dbReference type="PIRSF" id="PIRSF001365">
    <property type="entry name" value="DHDPS"/>
    <property type="match status" value="1"/>
</dbReference>
<dbReference type="PRINTS" id="PR00146">
    <property type="entry name" value="DHPICSNTHASE"/>
</dbReference>
<dbReference type="SMART" id="SM01130">
    <property type="entry name" value="DHDPS"/>
    <property type="match status" value="1"/>
</dbReference>
<dbReference type="SUPFAM" id="SSF51569">
    <property type="entry name" value="Aldolase"/>
    <property type="match status" value="1"/>
</dbReference>
<dbReference type="PROSITE" id="PS00665">
    <property type="entry name" value="DHDPS_1"/>
    <property type="match status" value="1"/>
</dbReference>
<dbReference type="PROSITE" id="PS00666">
    <property type="entry name" value="DHDPS_2"/>
    <property type="match status" value="1"/>
</dbReference>
<reference key="1">
    <citation type="submission" date="2008-01" db="EMBL/GenBank/DDBJ databases">
        <title>Complete sequence of Thermoanaerobacter pseudethanolicus 39E.</title>
        <authorList>
            <person name="Copeland A."/>
            <person name="Lucas S."/>
            <person name="Lapidus A."/>
            <person name="Barry K."/>
            <person name="Glavina del Rio T."/>
            <person name="Dalin E."/>
            <person name="Tice H."/>
            <person name="Pitluck S."/>
            <person name="Bruce D."/>
            <person name="Goodwin L."/>
            <person name="Saunders E."/>
            <person name="Brettin T."/>
            <person name="Detter J.C."/>
            <person name="Han C."/>
            <person name="Schmutz J."/>
            <person name="Larimer F."/>
            <person name="Land M."/>
            <person name="Hauser L."/>
            <person name="Kyrpides N."/>
            <person name="Lykidis A."/>
            <person name="Hemme C."/>
            <person name="Fields M.W."/>
            <person name="He Z."/>
            <person name="Zhou J."/>
            <person name="Richardson P."/>
        </authorList>
    </citation>
    <scope>NUCLEOTIDE SEQUENCE [LARGE SCALE GENOMIC DNA]</scope>
    <source>
        <strain>ATCC 33223 / DSM 2355 / 39E</strain>
    </source>
</reference>
<name>DAPA_THEP3</name>
<accession>B0KAL7</accession>